<evidence type="ECO:0000255" key="1">
    <source>
        <dbReference type="HAMAP-Rule" id="MF_01218"/>
    </source>
</evidence>
<gene>
    <name evidence="1" type="primary">upp</name>
    <name type="ordered locus">CV_3621</name>
</gene>
<sequence>MNITIVDHPLVQHKLGLLREADTSTMKFRQLTQELARLLAYEATRDFELESVTIDGWCGKIDVKQIKGKKVTVVPILRAGIGMLDGVLDLVPSAKISVVGLARNEETLEPVSYFEKFVGNLDERIAIIIDPMLATGGSLVATIDLLKRNGCKHIKAVVMVAAPEGVKIVNDAHPDVQIYAASLDSHLNEHGYIIPGLGDAGDKIFGTKQA</sequence>
<feature type="chain" id="PRO_0000120814" description="Uracil phosphoribosyltransferase">
    <location>
        <begin position="1"/>
        <end position="210"/>
    </location>
</feature>
<feature type="binding site" evidence="1">
    <location>
        <position position="78"/>
    </location>
    <ligand>
        <name>5-phospho-alpha-D-ribose 1-diphosphate</name>
        <dbReference type="ChEBI" id="CHEBI:58017"/>
    </ligand>
</feature>
<feature type="binding site" evidence="1">
    <location>
        <position position="103"/>
    </location>
    <ligand>
        <name>5-phospho-alpha-D-ribose 1-diphosphate</name>
        <dbReference type="ChEBI" id="CHEBI:58017"/>
    </ligand>
</feature>
<feature type="binding site" evidence="1">
    <location>
        <begin position="130"/>
        <end position="138"/>
    </location>
    <ligand>
        <name>5-phospho-alpha-D-ribose 1-diphosphate</name>
        <dbReference type="ChEBI" id="CHEBI:58017"/>
    </ligand>
</feature>
<feature type="binding site" evidence="1">
    <location>
        <position position="193"/>
    </location>
    <ligand>
        <name>uracil</name>
        <dbReference type="ChEBI" id="CHEBI:17568"/>
    </ligand>
</feature>
<feature type="binding site" evidence="1">
    <location>
        <begin position="198"/>
        <end position="200"/>
    </location>
    <ligand>
        <name>uracil</name>
        <dbReference type="ChEBI" id="CHEBI:17568"/>
    </ligand>
</feature>
<feature type="binding site" evidence="1">
    <location>
        <position position="199"/>
    </location>
    <ligand>
        <name>5-phospho-alpha-D-ribose 1-diphosphate</name>
        <dbReference type="ChEBI" id="CHEBI:58017"/>
    </ligand>
</feature>
<dbReference type="EC" id="2.4.2.9" evidence="1"/>
<dbReference type="EMBL" id="AE016825">
    <property type="protein sequence ID" value="AAQ61283.1"/>
    <property type="molecule type" value="Genomic_DNA"/>
</dbReference>
<dbReference type="RefSeq" id="WP_011137168.1">
    <property type="nucleotide sequence ID" value="NC_005085.1"/>
</dbReference>
<dbReference type="SMR" id="Q7NS06"/>
<dbReference type="STRING" id="243365.CV_3621"/>
<dbReference type="GeneID" id="66364854"/>
<dbReference type="KEGG" id="cvi:CV_3621"/>
<dbReference type="eggNOG" id="COG0035">
    <property type="taxonomic scope" value="Bacteria"/>
</dbReference>
<dbReference type="HOGENOM" id="CLU_067096_2_2_4"/>
<dbReference type="OrthoDB" id="9781675at2"/>
<dbReference type="UniPathway" id="UPA00574">
    <property type="reaction ID" value="UER00636"/>
</dbReference>
<dbReference type="Proteomes" id="UP000001424">
    <property type="component" value="Chromosome"/>
</dbReference>
<dbReference type="GO" id="GO:0005525">
    <property type="term" value="F:GTP binding"/>
    <property type="evidence" value="ECO:0007669"/>
    <property type="project" value="UniProtKB-KW"/>
</dbReference>
<dbReference type="GO" id="GO:0000287">
    <property type="term" value="F:magnesium ion binding"/>
    <property type="evidence" value="ECO:0007669"/>
    <property type="project" value="UniProtKB-UniRule"/>
</dbReference>
<dbReference type="GO" id="GO:0004845">
    <property type="term" value="F:uracil phosphoribosyltransferase activity"/>
    <property type="evidence" value="ECO:0007669"/>
    <property type="project" value="UniProtKB-UniRule"/>
</dbReference>
<dbReference type="GO" id="GO:0044206">
    <property type="term" value="P:UMP salvage"/>
    <property type="evidence" value="ECO:0007669"/>
    <property type="project" value="UniProtKB-UniRule"/>
</dbReference>
<dbReference type="GO" id="GO:0006223">
    <property type="term" value="P:uracil salvage"/>
    <property type="evidence" value="ECO:0007669"/>
    <property type="project" value="InterPro"/>
</dbReference>
<dbReference type="CDD" id="cd06223">
    <property type="entry name" value="PRTases_typeI"/>
    <property type="match status" value="1"/>
</dbReference>
<dbReference type="FunFam" id="3.40.50.2020:FF:000003">
    <property type="entry name" value="Uracil phosphoribosyltransferase"/>
    <property type="match status" value="1"/>
</dbReference>
<dbReference type="Gene3D" id="3.40.50.2020">
    <property type="match status" value="1"/>
</dbReference>
<dbReference type="HAMAP" id="MF_01218_B">
    <property type="entry name" value="Upp_B"/>
    <property type="match status" value="1"/>
</dbReference>
<dbReference type="InterPro" id="IPR000836">
    <property type="entry name" value="PRibTrfase_dom"/>
</dbReference>
<dbReference type="InterPro" id="IPR029057">
    <property type="entry name" value="PRTase-like"/>
</dbReference>
<dbReference type="InterPro" id="IPR034332">
    <property type="entry name" value="Upp_B"/>
</dbReference>
<dbReference type="InterPro" id="IPR050054">
    <property type="entry name" value="UPRTase/APRTase"/>
</dbReference>
<dbReference type="InterPro" id="IPR005765">
    <property type="entry name" value="Ura_phspho_trans"/>
</dbReference>
<dbReference type="NCBIfam" id="NF001097">
    <property type="entry name" value="PRK00129.1"/>
    <property type="match status" value="1"/>
</dbReference>
<dbReference type="NCBIfam" id="TIGR01091">
    <property type="entry name" value="upp"/>
    <property type="match status" value="1"/>
</dbReference>
<dbReference type="PANTHER" id="PTHR32315">
    <property type="entry name" value="ADENINE PHOSPHORIBOSYLTRANSFERASE"/>
    <property type="match status" value="1"/>
</dbReference>
<dbReference type="PANTHER" id="PTHR32315:SF4">
    <property type="entry name" value="URACIL PHOSPHORIBOSYLTRANSFERASE, CHLOROPLASTIC"/>
    <property type="match status" value="1"/>
</dbReference>
<dbReference type="Pfam" id="PF14681">
    <property type="entry name" value="UPRTase"/>
    <property type="match status" value="1"/>
</dbReference>
<dbReference type="SUPFAM" id="SSF53271">
    <property type="entry name" value="PRTase-like"/>
    <property type="match status" value="1"/>
</dbReference>
<keyword id="KW-0021">Allosteric enzyme</keyword>
<keyword id="KW-0328">Glycosyltransferase</keyword>
<keyword id="KW-0342">GTP-binding</keyword>
<keyword id="KW-0460">Magnesium</keyword>
<keyword id="KW-0547">Nucleotide-binding</keyword>
<keyword id="KW-1185">Reference proteome</keyword>
<keyword id="KW-0808">Transferase</keyword>
<accession>Q7NS06</accession>
<proteinExistence type="inferred from homology"/>
<organism>
    <name type="scientific">Chromobacterium violaceum (strain ATCC 12472 / DSM 30191 / JCM 1249 / CCUG 213 / NBRC 12614 / NCIMB 9131 / NCTC 9757 / MK)</name>
    <dbReference type="NCBI Taxonomy" id="243365"/>
    <lineage>
        <taxon>Bacteria</taxon>
        <taxon>Pseudomonadati</taxon>
        <taxon>Pseudomonadota</taxon>
        <taxon>Betaproteobacteria</taxon>
        <taxon>Neisseriales</taxon>
        <taxon>Chromobacteriaceae</taxon>
        <taxon>Chromobacterium</taxon>
    </lineage>
</organism>
<reference key="1">
    <citation type="journal article" date="2003" name="Proc. Natl. Acad. Sci. U.S.A.">
        <title>The complete genome sequence of Chromobacterium violaceum reveals remarkable and exploitable bacterial adaptability.</title>
        <authorList>
            <person name="Vasconcelos A.T.R."/>
            <person name="de Almeida D.F."/>
            <person name="Hungria M."/>
            <person name="Guimaraes C.T."/>
            <person name="Antonio R.V."/>
            <person name="Almeida F.C."/>
            <person name="de Almeida L.G.P."/>
            <person name="de Almeida R."/>
            <person name="Alves-Gomes J.A."/>
            <person name="Andrade E.M."/>
            <person name="Araripe J."/>
            <person name="de Araujo M.F.F."/>
            <person name="Astolfi-Filho S."/>
            <person name="Azevedo V."/>
            <person name="Baptista A.J."/>
            <person name="Bataus L.A.M."/>
            <person name="Batista J.S."/>
            <person name="Belo A."/>
            <person name="van den Berg C."/>
            <person name="Bogo M."/>
            <person name="Bonatto S."/>
            <person name="Bordignon J."/>
            <person name="Brigido M.M."/>
            <person name="Brito C.A."/>
            <person name="Brocchi M."/>
            <person name="Burity H.A."/>
            <person name="Camargo A.A."/>
            <person name="Cardoso D.D.P."/>
            <person name="Carneiro N.P."/>
            <person name="Carraro D.M."/>
            <person name="Carvalho C.M.B."/>
            <person name="Cascardo J.C.M."/>
            <person name="Cavada B.S."/>
            <person name="Chueire L.M.O."/>
            <person name="Creczynski-Pasa T.B."/>
            <person name="Cunha-Junior N.C."/>
            <person name="Fagundes N."/>
            <person name="Falcao C.L."/>
            <person name="Fantinatti F."/>
            <person name="Farias I.P."/>
            <person name="Felipe M.S.S."/>
            <person name="Ferrari L.P."/>
            <person name="Ferro J.A."/>
            <person name="Ferro M.I.T."/>
            <person name="Franco G.R."/>
            <person name="Freitas N.S.A."/>
            <person name="Furlan L.R."/>
            <person name="Gazzinelli R.T."/>
            <person name="Gomes E.A."/>
            <person name="Goncalves P.R."/>
            <person name="Grangeiro T.B."/>
            <person name="Grattapaglia D."/>
            <person name="Grisard E.C."/>
            <person name="Hanna E.S."/>
            <person name="Jardim S.N."/>
            <person name="Laurino J."/>
            <person name="Leoi L.C.T."/>
            <person name="Lima L.F.A."/>
            <person name="Loureiro M.F."/>
            <person name="Lyra M.C.C.P."/>
            <person name="Madeira H.M.F."/>
            <person name="Manfio G.P."/>
            <person name="Maranhao A.Q."/>
            <person name="Martins W.S."/>
            <person name="di Mauro S.M.Z."/>
            <person name="de Medeiros S.R.B."/>
            <person name="Meissner R.V."/>
            <person name="Moreira M.A.M."/>
            <person name="Nascimento F.F."/>
            <person name="Nicolas M.F."/>
            <person name="Oliveira J.G."/>
            <person name="Oliveira S.C."/>
            <person name="Paixao R.F.C."/>
            <person name="Parente J.A."/>
            <person name="Pedrosa F.O."/>
            <person name="Pena S.D.J."/>
            <person name="Pereira J.O."/>
            <person name="Pereira M."/>
            <person name="Pinto L.S.R.C."/>
            <person name="Pinto L.S."/>
            <person name="Porto J.I.R."/>
            <person name="Potrich D.P."/>
            <person name="Ramalho-Neto C.E."/>
            <person name="Reis A.M.M."/>
            <person name="Rigo L.U."/>
            <person name="Rondinelli E."/>
            <person name="Santos E.B.P."/>
            <person name="Santos F.R."/>
            <person name="Schneider M.P.C."/>
            <person name="Seuanez H.N."/>
            <person name="Silva A.M.R."/>
            <person name="da Silva A.L.C."/>
            <person name="Silva D.W."/>
            <person name="Silva R."/>
            <person name="Simoes I.C."/>
            <person name="Simon D."/>
            <person name="Soares C.M.A."/>
            <person name="Soares R.B.A."/>
            <person name="Souza E.M."/>
            <person name="Souza K.R.L."/>
            <person name="Souza R.C."/>
            <person name="Steffens M.B.R."/>
            <person name="Steindel M."/>
            <person name="Teixeira S.R."/>
            <person name="Urmenyi T."/>
            <person name="Vettore A."/>
            <person name="Wassem R."/>
            <person name="Zaha A."/>
            <person name="Simpson A.J.G."/>
        </authorList>
    </citation>
    <scope>NUCLEOTIDE SEQUENCE [LARGE SCALE GENOMIC DNA]</scope>
    <source>
        <strain>ATCC 12472 / DSM 30191 / JCM 1249 / CCUG 213 / NBRC 12614 / NCIMB 9131 / NCTC 9757 / MK</strain>
    </source>
</reference>
<comment type="function">
    <text evidence="1">Catalyzes the conversion of uracil and 5-phospho-alpha-D-ribose 1-diphosphate (PRPP) to UMP and diphosphate.</text>
</comment>
<comment type="catalytic activity">
    <reaction evidence="1">
        <text>UMP + diphosphate = 5-phospho-alpha-D-ribose 1-diphosphate + uracil</text>
        <dbReference type="Rhea" id="RHEA:13017"/>
        <dbReference type="ChEBI" id="CHEBI:17568"/>
        <dbReference type="ChEBI" id="CHEBI:33019"/>
        <dbReference type="ChEBI" id="CHEBI:57865"/>
        <dbReference type="ChEBI" id="CHEBI:58017"/>
        <dbReference type="EC" id="2.4.2.9"/>
    </reaction>
</comment>
<comment type="cofactor">
    <cofactor evidence="1">
        <name>Mg(2+)</name>
        <dbReference type="ChEBI" id="CHEBI:18420"/>
    </cofactor>
    <text evidence="1">Binds 1 Mg(2+) ion per subunit. The magnesium is bound as Mg-PRPP.</text>
</comment>
<comment type="activity regulation">
    <text evidence="1">Allosterically activated by GTP.</text>
</comment>
<comment type="pathway">
    <text evidence="1">Pyrimidine metabolism; UMP biosynthesis via salvage pathway; UMP from uracil: step 1/1.</text>
</comment>
<comment type="similarity">
    <text evidence="1">Belongs to the UPRTase family.</text>
</comment>
<name>UPP_CHRVO</name>
<protein>
    <recommendedName>
        <fullName evidence="1">Uracil phosphoribosyltransferase</fullName>
        <ecNumber evidence="1">2.4.2.9</ecNumber>
    </recommendedName>
    <alternativeName>
        <fullName evidence="1">UMP pyrophosphorylase</fullName>
    </alternativeName>
    <alternativeName>
        <fullName evidence="1">UPRTase</fullName>
    </alternativeName>
</protein>